<keyword id="KW-0285">Flavoprotein</keyword>
<keyword id="KW-0288">FMN</keyword>
<keyword id="KW-0503">Monooxygenase</keyword>
<keyword id="KW-0521">NADP</keyword>
<keyword id="KW-0560">Oxidoreductase</keyword>
<proteinExistence type="inferred from homology"/>
<sequence length="382" mass="42219">MQDAAPRLTFTLRDEERLMMKIGVFVPIGNNGWLISTHAPQYMPTFELNKAIVQKAEHYHFDFALSMIKLRGFGGKTEFWDHNLESFTLMAGLAAVTSRIQIYATAATLTLPPAIVARMAATIDSISGGRFGVNLVTGWQKPEYEQMGIWPGDDYFSRRYDYLTEYVQVLRDLWGTGKSDFKGDFFTMNDCRVSPQPSVPMKVICAGQSDAGMAFSARYADFNFCFGKGVNTPTAFAPTAARMKQAAEQTGRDVGSYVLFMVIADETDDAARAKWEHYKAGADEEALSWLTEQSQKDTRSGTDTNVRQMADPTSAVNINMGTLVGSYASVARMLDEVASVPGAEGVLLTFDDFLSGIETFGERIQPLMQCRAHLPALTQEVA</sequence>
<comment type="function">
    <text evidence="1">Catalyzes the pyrimidine ring opening between N-3 and C-4 by an unusual flavin hydroperoxide-catalyzed mechanism, adding oxygen atoms in the process to yield ureidoacrylate peracid, that immediately reacts with FMN forming ureidoacrylate and FMN-N(5)-oxide. The FMN-N(5)-oxide reacts spontaneously with NADH to produce FMN. Requires the flavin reductase RutF to regenerate FMN in vivo.</text>
</comment>
<comment type="catalytic activity">
    <reaction evidence="1">
        <text>uracil + FMNH2 + NADH + O2 = (Z)-3-ureidoacrylate + FMN + NAD(+) + H2O + H(+)</text>
        <dbReference type="Rhea" id="RHEA:31587"/>
        <dbReference type="ChEBI" id="CHEBI:15377"/>
        <dbReference type="ChEBI" id="CHEBI:15378"/>
        <dbReference type="ChEBI" id="CHEBI:15379"/>
        <dbReference type="ChEBI" id="CHEBI:17568"/>
        <dbReference type="ChEBI" id="CHEBI:57540"/>
        <dbReference type="ChEBI" id="CHEBI:57618"/>
        <dbReference type="ChEBI" id="CHEBI:57945"/>
        <dbReference type="ChEBI" id="CHEBI:58210"/>
        <dbReference type="ChEBI" id="CHEBI:59891"/>
        <dbReference type="EC" id="1.14.99.46"/>
    </reaction>
</comment>
<comment type="catalytic activity">
    <reaction evidence="1">
        <text>thymine + FMNH2 + NADH + O2 = (Z)-2-methylureidoacrylate + FMN + NAD(+) + H2O + H(+)</text>
        <dbReference type="Rhea" id="RHEA:31599"/>
        <dbReference type="ChEBI" id="CHEBI:15377"/>
        <dbReference type="ChEBI" id="CHEBI:15378"/>
        <dbReference type="ChEBI" id="CHEBI:15379"/>
        <dbReference type="ChEBI" id="CHEBI:17821"/>
        <dbReference type="ChEBI" id="CHEBI:57540"/>
        <dbReference type="ChEBI" id="CHEBI:57618"/>
        <dbReference type="ChEBI" id="CHEBI:57945"/>
        <dbReference type="ChEBI" id="CHEBI:58210"/>
        <dbReference type="ChEBI" id="CHEBI:143783"/>
        <dbReference type="EC" id="1.14.99.46"/>
    </reaction>
</comment>
<comment type="induction">
    <text evidence="1">Up-regulated by the nitrogen regulatory protein C (NtrC also called GlnG) and repressed by RutR.</text>
</comment>
<comment type="similarity">
    <text evidence="1">Belongs to the NtaA/SnaA/DszA monooxygenase family. RutA subfamily.</text>
</comment>
<evidence type="ECO:0000255" key="1">
    <source>
        <dbReference type="HAMAP-Rule" id="MF_01699"/>
    </source>
</evidence>
<feature type="chain" id="PRO_0000402600" description="Pyrimidine monooxygenase RutA">
    <location>
        <begin position="1"/>
        <end position="382"/>
    </location>
</feature>
<feature type="binding site" evidence="1">
    <location>
        <begin position="68"/>
        <end position="69"/>
    </location>
    <ligand>
        <name>FMN</name>
        <dbReference type="ChEBI" id="CHEBI:58210"/>
    </ligand>
</feature>
<feature type="binding site" evidence="1">
    <location>
        <position position="134"/>
    </location>
    <ligand>
        <name>FMN</name>
        <dbReference type="ChEBI" id="CHEBI:58210"/>
    </ligand>
</feature>
<feature type="binding site" evidence="1">
    <location>
        <position position="143"/>
    </location>
    <ligand>
        <name>FMN</name>
        <dbReference type="ChEBI" id="CHEBI:58210"/>
    </ligand>
</feature>
<feature type="binding site" evidence="1">
    <location>
        <begin position="159"/>
        <end position="160"/>
    </location>
    <ligand>
        <name>FMN</name>
        <dbReference type="ChEBI" id="CHEBI:58210"/>
    </ligand>
</feature>
<feature type="binding site" evidence="1">
    <location>
        <position position="209"/>
    </location>
    <ligand>
        <name>FMN</name>
        <dbReference type="ChEBI" id="CHEBI:58210"/>
    </ligand>
</feature>
<gene>
    <name evidence="1" type="primary">rutA</name>
    <name type="ordered locus">BWG_0866</name>
</gene>
<accession>C4ZQE0</accession>
<dbReference type="EC" id="1.14.99.46" evidence="1"/>
<dbReference type="EMBL" id="CP001396">
    <property type="protein sequence ID" value="ACR64673.1"/>
    <property type="molecule type" value="Genomic_DNA"/>
</dbReference>
<dbReference type="SMR" id="C4ZQE0"/>
<dbReference type="KEGG" id="ebw:BWG_0866"/>
<dbReference type="HOGENOM" id="CLU_027853_1_1_6"/>
<dbReference type="GO" id="GO:0008726">
    <property type="term" value="F:alkanesulfonate monooxygenase activity"/>
    <property type="evidence" value="ECO:0007669"/>
    <property type="project" value="TreeGrafter"/>
</dbReference>
<dbReference type="GO" id="GO:0052614">
    <property type="term" value="F:uracil oxygenase activity"/>
    <property type="evidence" value="ECO:0007669"/>
    <property type="project" value="UniProtKB-EC"/>
</dbReference>
<dbReference type="GO" id="GO:0046306">
    <property type="term" value="P:alkanesulfonate catabolic process"/>
    <property type="evidence" value="ECO:0007669"/>
    <property type="project" value="TreeGrafter"/>
</dbReference>
<dbReference type="GO" id="GO:0019740">
    <property type="term" value="P:nitrogen utilization"/>
    <property type="evidence" value="ECO:0007669"/>
    <property type="project" value="UniProtKB-UniRule"/>
</dbReference>
<dbReference type="GO" id="GO:0006212">
    <property type="term" value="P:uracil catabolic process"/>
    <property type="evidence" value="ECO:0007669"/>
    <property type="project" value="UniProtKB-UniRule"/>
</dbReference>
<dbReference type="CDD" id="cd01094">
    <property type="entry name" value="Alkanesulfonate_monoxygenase"/>
    <property type="match status" value="1"/>
</dbReference>
<dbReference type="FunFam" id="3.20.20.30:FF:000003">
    <property type="entry name" value="Pyrimidine monooxygenase RutA"/>
    <property type="match status" value="1"/>
</dbReference>
<dbReference type="Gene3D" id="3.20.20.30">
    <property type="entry name" value="Luciferase-like domain"/>
    <property type="match status" value="1"/>
</dbReference>
<dbReference type="HAMAP" id="MF_01699">
    <property type="entry name" value="RutA"/>
    <property type="match status" value="1"/>
</dbReference>
<dbReference type="InterPro" id="IPR011251">
    <property type="entry name" value="Luciferase-like_dom"/>
</dbReference>
<dbReference type="InterPro" id="IPR036661">
    <property type="entry name" value="Luciferase-like_sf"/>
</dbReference>
<dbReference type="InterPro" id="IPR019914">
    <property type="entry name" value="Pyrimidine_monooxygenase_RutA"/>
</dbReference>
<dbReference type="InterPro" id="IPR050172">
    <property type="entry name" value="SsuD_RutA_monooxygenase"/>
</dbReference>
<dbReference type="NCBIfam" id="TIGR03612">
    <property type="entry name" value="RutA"/>
    <property type="match status" value="1"/>
</dbReference>
<dbReference type="PANTHER" id="PTHR42847">
    <property type="entry name" value="ALKANESULFONATE MONOOXYGENASE"/>
    <property type="match status" value="1"/>
</dbReference>
<dbReference type="PANTHER" id="PTHR42847:SF4">
    <property type="entry name" value="ALKANESULFONATE MONOOXYGENASE-RELATED"/>
    <property type="match status" value="1"/>
</dbReference>
<dbReference type="Pfam" id="PF00296">
    <property type="entry name" value="Bac_luciferase"/>
    <property type="match status" value="1"/>
</dbReference>
<dbReference type="SUPFAM" id="SSF51679">
    <property type="entry name" value="Bacterial luciferase-like"/>
    <property type="match status" value="1"/>
</dbReference>
<organism>
    <name type="scientific">Escherichia coli (strain K12 / MC4100 / BW2952)</name>
    <dbReference type="NCBI Taxonomy" id="595496"/>
    <lineage>
        <taxon>Bacteria</taxon>
        <taxon>Pseudomonadati</taxon>
        <taxon>Pseudomonadota</taxon>
        <taxon>Gammaproteobacteria</taxon>
        <taxon>Enterobacterales</taxon>
        <taxon>Enterobacteriaceae</taxon>
        <taxon>Escherichia</taxon>
    </lineage>
</organism>
<name>RUTA_ECOBW</name>
<protein>
    <recommendedName>
        <fullName evidence="1">Pyrimidine monooxygenase RutA</fullName>
        <ecNumber evidence="1">1.14.99.46</ecNumber>
    </recommendedName>
</protein>
<reference key="1">
    <citation type="journal article" date="2009" name="J. Bacteriol.">
        <title>Genomic sequencing reveals regulatory mutations and recombinational events in the widely used MC4100 lineage of Escherichia coli K-12.</title>
        <authorList>
            <person name="Ferenci T."/>
            <person name="Zhou Z."/>
            <person name="Betteridge T."/>
            <person name="Ren Y."/>
            <person name="Liu Y."/>
            <person name="Feng L."/>
            <person name="Reeves P.R."/>
            <person name="Wang L."/>
        </authorList>
    </citation>
    <scope>NUCLEOTIDE SEQUENCE [LARGE SCALE GENOMIC DNA]</scope>
    <source>
        <strain>K12 / MC4100 / BW2952</strain>
    </source>
</reference>